<keyword id="KW-0025">Alternative splicing</keyword>
<keyword id="KW-0325">Glycoprotein</keyword>
<keyword id="KW-0333">Golgi apparatus</keyword>
<keyword id="KW-0472">Membrane</keyword>
<keyword id="KW-1185">Reference proteome</keyword>
<keyword id="KW-0677">Repeat</keyword>
<keyword id="KW-0735">Signal-anchor</keyword>
<keyword id="KW-0812">Transmembrane</keyword>
<keyword id="KW-1133">Transmembrane helix</keyword>
<evidence type="ECO:0000255" key="1"/>
<evidence type="ECO:0000255" key="2">
    <source>
        <dbReference type="PROSITE-ProRule" id="PRU00558"/>
    </source>
</evidence>
<evidence type="ECO:0000269" key="3">
    <source>
    </source>
</evidence>
<evidence type="ECO:0000303" key="4">
    <source>
    </source>
</evidence>
<evidence type="ECO:0000303" key="5">
    <source>
    </source>
</evidence>
<evidence type="ECO:0000303" key="6">
    <source>
    </source>
</evidence>
<evidence type="ECO:0000303" key="7">
    <source>
    </source>
</evidence>
<evidence type="ECO:0000305" key="8"/>
<evidence type="ECO:0000305" key="9">
    <source>
    </source>
</evidence>
<accession>D4PHA7</accession>
<accession>Q69ZZ2</accession>
<accession>Q8C7Q3</accession>
<protein>
    <recommendedName>
        <fullName evidence="7">Sialate:O-sulfotransferase 2</fullName>
    </recommendedName>
    <alternativeName>
        <fullName>WSC domain-containing protein 2</fullName>
    </alternativeName>
</protein>
<name>WSCD2_MOUSE</name>
<proteinExistence type="evidence at protein level"/>
<comment type="function">
    <text evidence="3">Sialate:O-sulfotransferase that catalyzes 8-O-sulfation at the Sia-glycan level using 3'-phosphoadenosine 5'-phosphosulfate (PAPS) as a donor, forming 8-O-sulfated Sia (Sia8S)-glycans. Displays selectivity toward glycoproteins such as TF/transferrin.</text>
</comment>
<comment type="subcellular location">
    <subcellularLocation>
        <location evidence="9">Golgi apparatus membrane</location>
        <topology evidence="9">Single-pass type II membrane protein</topology>
    </subcellularLocation>
</comment>
<comment type="alternative products">
    <event type="alternative splicing"/>
    <isoform>
        <id>D4PHA7-1</id>
        <name>1</name>
        <sequence type="displayed"/>
    </isoform>
    <isoform>
        <id>D4PHA7-2</id>
        <name>2</name>
        <sequence type="described" ref="VSP_042508 VSP_042509"/>
    </isoform>
</comment>
<comment type="miscellaneous">
    <molecule>Isoform 2</molecule>
    <text evidence="8">May be due to an intron retention.</text>
</comment>
<comment type="similarity">
    <text evidence="8">Belongs to the WSCD family.</text>
</comment>
<comment type="sequence caution" evidence="8">
    <conflict type="erroneous initiation">
        <sequence resource="EMBL-CDS" id="BAD32304"/>
    </conflict>
    <text>Truncated N-terminus.</text>
</comment>
<sequence length="571" mass="64598">MAKLWFKFQRCFRYFRRKPVRFFTLLAIYLTAGSLVFLHSGFVGQPAVPQSQASPAAGSPVEGAELPFLGDLHLGRGFRDTVEASSIARRYGPTFKGKDTSERAKLGDYGGAWSRALKGRVVREKEKEKEEEKAKYIGCYLDDTQSRALRGVSFFDYKKMTVFRCQDNCAERGYLYAGLEFGAECYCGHKIQAANVSESDCDMECKGERGSVCGGINRLSVYRLQLAQESARRYGSAVFRGCFRRPNNLSLALPVSAAMPNMSVDKCVDLCTEKEFPLAALAGTACHCGFPTTRFPLHDREDEQLCAQKCSAEEFESCGTPSYFIVYQTQVQDNRCMDRRFLPAKSKKLIALASFPGAGNTWARHLIELATGFYTGSYYFDGSLYNKGFKGERDHWRSGRTICIKTHESGQKEIEAFDAAILLIRNPYKALMAEFNRKYGGHIGFAAHAHWKGKEWPEFVRNYAPWWATHTLDWLKFGKTVLVVHFEDLKQDLFTQLGRMVSLLGVAVREDRLLCVESQKDGNFKRSGLRKLEYDPYTAEMRRTIAAYIRMVDTALRSRNLTGVPDAYGPR</sequence>
<organism>
    <name type="scientific">Mus musculus</name>
    <name type="common">Mouse</name>
    <dbReference type="NCBI Taxonomy" id="10090"/>
    <lineage>
        <taxon>Eukaryota</taxon>
        <taxon>Metazoa</taxon>
        <taxon>Chordata</taxon>
        <taxon>Craniata</taxon>
        <taxon>Vertebrata</taxon>
        <taxon>Euteleostomi</taxon>
        <taxon>Mammalia</taxon>
        <taxon>Eutheria</taxon>
        <taxon>Euarchontoglires</taxon>
        <taxon>Glires</taxon>
        <taxon>Rodentia</taxon>
        <taxon>Myomorpha</taxon>
        <taxon>Muroidea</taxon>
        <taxon>Muridae</taxon>
        <taxon>Murinae</taxon>
        <taxon>Mus</taxon>
        <taxon>Mus</taxon>
    </lineage>
</organism>
<dbReference type="EMBL" id="AK173026">
    <property type="protein sequence ID" value="BAD32304.1"/>
    <property type="status" value="ALT_INIT"/>
    <property type="molecule type" value="mRNA"/>
</dbReference>
<dbReference type="EMBL" id="AK049685">
    <property type="protein sequence ID" value="BAC33871.1"/>
    <property type="molecule type" value="mRNA"/>
</dbReference>
<dbReference type="EMBL" id="AC121909">
    <property type="status" value="NOT_ANNOTATED_CDS"/>
    <property type="molecule type" value="Genomic_DNA"/>
</dbReference>
<dbReference type="EMBL" id="CAAA01026602">
    <property type="status" value="NOT_ANNOTATED_CDS"/>
    <property type="molecule type" value="Genomic_DNA"/>
</dbReference>
<dbReference type="EMBL" id="CAAA01091397">
    <property type="status" value="NOT_ANNOTATED_CDS"/>
    <property type="molecule type" value="Genomic_DNA"/>
</dbReference>
<dbReference type="EMBL" id="CAAA01144085">
    <property type="status" value="NOT_ANNOTATED_CDS"/>
    <property type="molecule type" value="Genomic_DNA"/>
</dbReference>
<dbReference type="EMBL" id="CAAA01166320">
    <property type="status" value="NOT_ANNOTATED_CDS"/>
    <property type="molecule type" value="Genomic_DNA"/>
</dbReference>
<dbReference type="EMBL" id="CAAA01167025">
    <property type="status" value="NOT_ANNOTATED_CDS"/>
    <property type="molecule type" value="Genomic_DNA"/>
</dbReference>
<dbReference type="EMBL" id="CAAA01189638">
    <property type="status" value="NOT_ANNOTATED_CDS"/>
    <property type="molecule type" value="Genomic_DNA"/>
</dbReference>
<dbReference type="EMBL" id="CH466529">
    <property type="protein sequence ID" value="EDL19945.1"/>
    <property type="molecule type" value="Genomic_DNA"/>
</dbReference>
<dbReference type="EMBL" id="CH466529">
    <property type="protein sequence ID" value="EDL19946.1"/>
    <property type="molecule type" value="Genomic_DNA"/>
</dbReference>
<dbReference type="EMBL" id="BC096526">
    <property type="status" value="NOT_ANNOTATED_CDS"/>
    <property type="molecule type" value="mRNA"/>
</dbReference>
<dbReference type="EMBL" id="BC147280">
    <property type="protein sequence ID" value="AAI47281.1"/>
    <property type="molecule type" value="mRNA"/>
</dbReference>
<dbReference type="EMBL" id="BC147281">
    <property type="protein sequence ID" value="AAI47282.1"/>
    <property type="molecule type" value="mRNA"/>
</dbReference>
<dbReference type="CCDS" id="CCDS19550.2">
    <molecule id="D4PHA7-1"/>
</dbReference>
<dbReference type="RefSeq" id="NP_796266.2">
    <molecule id="D4PHA7-1"/>
    <property type="nucleotide sequence ID" value="NM_177292.3"/>
</dbReference>
<dbReference type="RefSeq" id="XP_017176417.1">
    <molecule id="D4PHA7-1"/>
    <property type="nucleotide sequence ID" value="XM_017320928.2"/>
</dbReference>
<dbReference type="SMR" id="D4PHA7"/>
<dbReference type="FunCoup" id="D4PHA7">
    <property type="interactions" value="25"/>
</dbReference>
<dbReference type="STRING" id="10090.ENSMUSP00000092021"/>
<dbReference type="GlyCosmos" id="D4PHA7">
    <property type="glycosylation" value="2 sites, No reported glycans"/>
</dbReference>
<dbReference type="GlyGen" id="D4PHA7">
    <property type="glycosylation" value="3 sites, 2 N-linked glycans (2 sites)"/>
</dbReference>
<dbReference type="iPTMnet" id="D4PHA7"/>
<dbReference type="PhosphoSitePlus" id="D4PHA7"/>
<dbReference type="PaxDb" id="10090-ENSMUSP00000092021"/>
<dbReference type="ProteomicsDB" id="297859">
    <molecule id="D4PHA7-1"/>
</dbReference>
<dbReference type="ProteomicsDB" id="297860">
    <molecule id="D4PHA7-2"/>
</dbReference>
<dbReference type="TopDownProteomics" id="D4PHA7-1">
    <molecule id="D4PHA7-1"/>
</dbReference>
<dbReference type="Antibodypedia" id="2240">
    <property type="antibodies" value="89 antibodies from 20 providers"/>
</dbReference>
<dbReference type="DNASU" id="320916"/>
<dbReference type="Ensembl" id="ENSMUST00000094452.4">
    <molecule id="D4PHA7-1"/>
    <property type="protein sequence ID" value="ENSMUSP00000092021.4"/>
    <property type="gene ID" value="ENSMUSG00000063430.10"/>
</dbReference>
<dbReference type="GeneID" id="320916"/>
<dbReference type="KEGG" id="mmu:320916"/>
<dbReference type="UCSC" id="uc029vmo.1">
    <molecule id="D4PHA7-2"/>
    <property type="organism name" value="mouse"/>
</dbReference>
<dbReference type="UCSC" id="uc029vmp.1">
    <molecule id="D4PHA7-1"/>
    <property type="organism name" value="mouse"/>
</dbReference>
<dbReference type="AGR" id="MGI:2445030"/>
<dbReference type="CTD" id="9671"/>
<dbReference type="MGI" id="MGI:2445030">
    <property type="gene designation" value="Wscd2"/>
</dbReference>
<dbReference type="VEuPathDB" id="HostDB:ENSMUSG00000063430"/>
<dbReference type="eggNOG" id="KOG4157">
    <property type="taxonomic scope" value="Eukaryota"/>
</dbReference>
<dbReference type="GeneTree" id="ENSGT00940000159434"/>
<dbReference type="HOGENOM" id="CLU_029239_0_0_1"/>
<dbReference type="InParanoid" id="D4PHA7"/>
<dbReference type="OMA" id="ERSNTCG"/>
<dbReference type="OrthoDB" id="5985073at2759"/>
<dbReference type="PhylomeDB" id="D4PHA7"/>
<dbReference type="TreeFam" id="TF324060"/>
<dbReference type="BioGRID-ORCS" id="320916">
    <property type="hits" value="3 hits in 56 CRISPR screens"/>
</dbReference>
<dbReference type="ChiTaRS" id="Wscd2">
    <property type="organism name" value="mouse"/>
</dbReference>
<dbReference type="PRO" id="PR:D4PHA7"/>
<dbReference type="Proteomes" id="UP000000589">
    <property type="component" value="Chromosome 5"/>
</dbReference>
<dbReference type="RNAct" id="D4PHA7">
    <property type="molecule type" value="protein"/>
</dbReference>
<dbReference type="Bgee" id="ENSMUSG00000063430">
    <property type="expression patterns" value="Expressed in epithelium of cochlear duct and 189 other cell types or tissues"/>
</dbReference>
<dbReference type="GO" id="GO:0000139">
    <property type="term" value="C:Golgi membrane"/>
    <property type="evidence" value="ECO:0000314"/>
    <property type="project" value="UniProtKB"/>
</dbReference>
<dbReference type="GO" id="GO:0008146">
    <property type="term" value="F:sulfotransferase activity"/>
    <property type="evidence" value="ECO:0000314"/>
    <property type="project" value="UniProtKB"/>
</dbReference>
<dbReference type="Gene3D" id="3.40.50.300">
    <property type="entry name" value="P-loop containing nucleotide triphosphate hydrolases"/>
    <property type="match status" value="1"/>
</dbReference>
<dbReference type="InterPro" id="IPR027417">
    <property type="entry name" value="P-loop_NTPase"/>
</dbReference>
<dbReference type="InterPro" id="IPR051589">
    <property type="entry name" value="Sialate-O-sulfotransferase"/>
</dbReference>
<dbReference type="InterPro" id="IPR002889">
    <property type="entry name" value="WSC_carb-bd"/>
</dbReference>
<dbReference type="PANTHER" id="PTHR45964:SF7">
    <property type="entry name" value="SIALATE:O-SULFOTRANSFERASE 2"/>
    <property type="match status" value="1"/>
</dbReference>
<dbReference type="PANTHER" id="PTHR45964">
    <property type="entry name" value="WSCD FAMILY MEMBER CG9164"/>
    <property type="match status" value="1"/>
</dbReference>
<dbReference type="Pfam" id="PF01822">
    <property type="entry name" value="WSC"/>
    <property type="match status" value="2"/>
</dbReference>
<dbReference type="SMART" id="SM00321">
    <property type="entry name" value="WSC"/>
    <property type="match status" value="2"/>
</dbReference>
<dbReference type="SUPFAM" id="SSF52540">
    <property type="entry name" value="P-loop containing nucleoside triphosphate hydrolases"/>
    <property type="match status" value="1"/>
</dbReference>
<dbReference type="PROSITE" id="PS51212">
    <property type="entry name" value="WSC"/>
    <property type="match status" value="2"/>
</dbReference>
<reference key="1">
    <citation type="journal article" date="2004" name="DNA Res.">
        <title>Prediction of the coding sequences of mouse homologues of KIAA gene: IV. The complete nucleotide sequences of 500 mouse KIAA-homologous cDNAs identified by screening of terminal sequences of cDNA clones randomly sampled from size-fractionated libraries.</title>
        <authorList>
            <person name="Okazaki N."/>
            <person name="Kikuno R."/>
            <person name="Ohara R."/>
            <person name="Inamoto S."/>
            <person name="Koseki H."/>
            <person name="Hiraoka S."/>
            <person name="Saga Y."/>
            <person name="Seino S."/>
            <person name="Nishimura M."/>
            <person name="Kaisho T."/>
            <person name="Hoshino K."/>
            <person name="Kitamura H."/>
            <person name="Nagase T."/>
            <person name="Ohara O."/>
            <person name="Koga H."/>
        </authorList>
    </citation>
    <scope>NUCLEOTIDE SEQUENCE [LARGE SCALE MRNA] (ISOFORMS 1 AND 2)</scope>
    <source>
        <strain>C57BL/6J</strain>
        <tissue>Brain</tissue>
    </source>
</reference>
<reference key="2">
    <citation type="journal article" date="2005" name="Science">
        <title>The transcriptional landscape of the mammalian genome.</title>
        <authorList>
            <person name="Carninci P."/>
            <person name="Kasukawa T."/>
            <person name="Katayama S."/>
            <person name="Gough J."/>
            <person name="Frith M.C."/>
            <person name="Maeda N."/>
            <person name="Oyama R."/>
            <person name="Ravasi T."/>
            <person name="Lenhard B."/>
            <person name="Wells C."/>
            <person name="Kodzius R."/>
            <person name="Shimokawa K."/>
            <person name="Bajic V.B."/>
            <person name="Brenner S.E."/>
            <person name="Batalov S."/>
            <person name="Forrest A.R."/>
            <person name="Zavolan M."/>
            <person name="Davis M.J."/>
            <person name="Wilming L.G."/>
            <person name="Aidinis V."/>
            <person name="Allen J.E."/>
            <person name="Ambesi-Impiombato A."/>
            <person name="Apweiler R."/>
            <person name="Aturaliya R.N."/>
            <person name="Bailey T.L."/>
            <person name="Bansal M."/>
            <person name="Baxter L."/>
            <person name="Beisel K.W."/>
            <person name="Bersano T."/>
            <person name="Bono H."/>
            <person name="Chalk A.M."/>
            <person name="Chiu K.P."/>
            <person name="Choudhary V."/>
            <person name="Christoffels A."/>
            <person name="Clutterbuck D.R."/>
            <person name="Crowe M.L."/>
            <person name="Dalla E."/>
            <person name="Dalrymple B.P."/>
            <person name="de Bono B."/>
            <person name="Della Gatta G."/>
            <person name="di Bernardo D."/>
            <person name="Down T."/>
            <person name="Engstrom P."/>
            <person name="Fagiolini M."/>
            <person name="Faulkner G."/>
            <person name="Fletcher C.F."/>
            <person name="Fukushima T."/>
            <person name="Furuno M."/>
            <person name="Futaki S."/>
            <person name="Gariboldi M."/>
            <person name="Georgii-Hemming P."/>
            <person name="Gingeras T.R."/>
            <person name="Gojobori T."/>
            <person name="Green R.E."/>
            <person name="Gustincich S."/>
            <person name="Harbers M."/>
            <person name="Hayashi Y."/>
            <person name="Hensch T.K."/>
            <person name="Hirokawa N."/>
            <person name="Hill D."/>
            <person name="Huminiecki L."/>
            <person name="Iacono M."/>
            <person name="Ikeo K."/>
            <person name="Iwama A."/>
            <person name="Ishikawa T."/>
            <person name="Jakt M."/>
            <person name="Kanapin A."/>
            <person name="Katoh M."/>
            <person name="Kawasawa Y."/>
            <person name="Kelso J."/>
            <person name="Kitamura H."/>
            <person name="Kitano H."/>
            <person name="Kollias G."/>
            <person name="Krishnan S.P."/>
            <person name="Kruger A."/>
            <person name="Kummerfeld S.K."/>
            <person name="Kurochkin I.V."/>
            <person name="Lareau L.F."/>
            <person name="Lazarevic D."/>
            <person name="Lipovich L."/>
            <person name="Liu J."/>
            <person name="Liuni S."/>
            <person name="McWilliam S."/>
            <person name="Madan Babu M."/>
            <person name="Madera M."/>
            <person name="Marchionni L."/>
            <person name="Matsuda H."/>
            <person name="Matsuzawa S."/>
            <person name="Miki H."/>
            <person name="Mignone F."/>
            <person name="Miyake S."/>
            <person name="Morris K."/>
            <person name="Mottagui-Tabar S."/>
            <person name="Mulder N."/>
            <person name="Nakano N."/>
            <person name="Nakauchi H."/>
            <person name="Ng P."/>
            <person name="Nilsson R."/>
            <person name="Nishiguchi S."/>
            <person name="Nishikawa S."/>
            <person name="Nori F."/>
            <person name="Ohara O."/>
            <person name="Okazaki Y."/>
            <person name="Orlando V."/>
            <person name="Pang K.C."/>
            <person name="Pavan W.J."/>
            <person name="Pavesi G."/>
            <person name="Pesole G."/>
            <person name="Petrovsky N."/>
            <person name="Piazza S."/>
            <person name="Reed J."/>
            <person name="Reid J.F."/>
            <person name="Ring B.Z."/>
            <person name="Ringwald M."/>
            <person name="Rost B."/>
            <person name="Ruan Y."/>
            <person name="Salzberg S.L."/>
            <person name="Sandelin A."/>
            <person name="Schneider C."/>
            <person name="Schoenbach C."/>
            <person name="Sekiguchi K."/>
            <person name="Semple C.A."/>
            <person name="Seno S."/>
            <person name="Sessa L."/>
            <person name="Sheng Y."/>
            <person name="Shibata Y."/>
            <person name="Shimada H."/>
            <person name="Shimada K."/>
            <person name="Silva D."/>
            <person name="Sinclair B."/>
            <person name="Sperling S."/>
            <person name="Stupka E."/>
            <person name="Sugiura K."/>
            <person name="Sultana R."/>
            <person name="Takenaka Y."/>
            <person name="Taki K."/>
            <person name="Tammoja K."/>
            <person name="Tan S.L."/>
            <person name="Tang S."/>
            <person name="Taylor M.S."/>
            <person name="Tegner J."/>
            <person name="Teichmann S.A."/>
            <person name="Ueda H.R."/>
            <person name="van Nimwegen E."/>
            <person name="Verardo R."/>
            <person name="Wei C.L."/>
            <person name="Yagi K."/>
            <person name="Yamanishi H."/>
            <person name="Zabarovsky E."/>
            <person name="Zhu S."/>
            <person name="Zimmer A."/>
            <person name="Hide W."/>
            <person name="Bult C."/>
            <person name="Grimmond S.M."/>
            <person name="Teasdale R.D."/>
            <person name="Liu E.T."/>
            <person name="Brusic V."/>
            <person name="Quackenbush J."/>
            <person name="Wahlestedt C."/>
            <person name="Mattick J.S."/>
            <person name="Hume D.A."/>
            <person name="Kai C."/>
            <person name="Sasaki D."/>
            <person name="Tomaru Y."/>
            <person name="Fukuda S."/>
            <person name="Kanamori-Katayama M."/>
            <person name="Suzuki M."/>
            <person name="Aoki J."/>
            <person name="Arakawa T."/>
            <person name="Iida J."/>
            <person name="Imamura K."/>
            <person name="Itoh M."/>
            <person name="Kato T."/>
            <person name="Kawaji H."/>
            <person name="Kawagashira N."/>
            <person name="Kawashima T."/>
            <person name="Kojima M."/>
            <person name="Kondo S."/>
            <person name="Konno H."/>
            <person name="Nakano K."/>
            <person name="Ninomiya N."/>
            <person name="Nishio T."/>
            <person name="Okada M."/>
            <person name="Plessy C."/>
            <person name="Shibata K."/>
            <person name="Shiraki T."/>
            <person name="Suzuki S."/>
            <person name="Tagami M."/>
            <person name="Waki K."/>
            <person name="Watahiki A."/>
            <person name="Okamura-Oho Y."/>
            <person name="Suzuki H."/>
            <person name="Kawai J."/>
            <person name="Hayashizaki Y."/>
        </authorList>
    </citation>
    <scope>NUCLEOTIDE SEQUENCE [LARGE SCALE MRNA] (ISOFORM 2)</scope>
    <source>
        <strain>C57BL/6J</strain>
        <tissue>Spinal cord</tissue>
    </source>
</reference>
<reference key="3">
    <citation type="journal article" date="2009" name="PLoS Biol.">
        <title>Lineage-specific biology revealed by a finished genome assembly of the mouse.</title>
        <authorList>
            <person name="Church D.M."/>
            <person name="Goodstadt L."/>
            <person name="Hillier L.W."/>
            <person name="Zody M.C."/>
            <person name="Goldstein S."/>
            <person name="She X."/>
            <person name="Bult C.J."/>
            <person name="Agarwala R."/>
            <person name="Cherry J.L."/>
            <person name="DiCuccio M."/>
            <person name="Hlavina W."/>
            <person name="Kapustin Y."/>
            <person name="Meric P."/>
            <person name="Maglott D."/>
            <person name="Birtle Z."/>
            <person name="Marques A.C."/>
            <person name="Graves T."/>
            <person name="Zhou S."/>
            <person name="Teague B."/>
            <person name="Potamousis K."/>
            <person name="Churas C."/>
            <person name="Place M."/>
            <person name="Herschleb J."/>
            <person name="Runnheim R."/>
            <person name="Forrest D."/>
            <person name="Amos-Landgraf J."/>
            <person name="Schwartz D.C."/>
            <person name="Cheng Z."/>
            <person name="Lindblad-Toh K."/>
            <person name="Eichler E.E."/>
            <person name="Ponting C.P."/>
        </authorList>
    </citation>
    <scope>NUCLEOTIDE SEQUENCE [LARGE SCALE GENOMIC DNA]</scope>
    <source>
        <strain>C57BL/6J</strain>
    </source>
</reference>
<reference key="4">
    <citation type="submission" date="2005-09" db="EMBL/GenBank/DDBJ databases">
        <authorList>
            <person name="Mural R.J."/>
            <person name="Adams M.D."/>
            <person name="Myers E.W."/>
            <person name="Smith H.O."/>
            <person name="Venter J.C."/>
        </authorList>
    </citation>
    <scope>NUCLEOTIDE SEQUENCE [LARGE SCALE GENOMIC DNA]</scope>
</reference>
<reference key="5">
    <citation type="journal article" date="2004" name="Genome Res.">
        <title>The status, quality, and expansion of the NIH full-length cDNA project: the Mammalian Gene Collection (MGC).</title>
        <authorList>
            <consortium name="The MGC Project Team"/>
        </authorList>
    </citation>
    <scope>NUCLEOTIDE SEQUENCE [LARGE SCALE MRNA] (ISOFORM 2)</scope>
    <source>
        <tissue>Brain</tissue>
    </source>
</reference>
<reference key="6">
    <citation type="journal article" date="2022" name="Sci. Rep.">
        <title>Sulfation of sialic acid is ubiquitous and essential for vertebrate development.</title>
        <authorList>
            <person name="Ertunc N."/>
            <person name="Phitak T."/>
            <person name="Wu D."/>
            <person name="Fujita H."/>
            <person name="Hane M."/>
            <person name="Sato C."/>
            <person name="Kitajima K."/>
        </authorList>
    </citation>
    <scope>FUNCTION</scope>
    <scope>CATALYTIC ACTIVITY</scope>
    <scope>SUBCELLULAR LOCATION</scope>
    <scope>TOPOLOGY</scope>
    <scope>MUTAGENESIS OF PRO-356; GLY-359; THR-361 AND TRP-362</scope>
</reference>
<feature type="chain" id="PRO_0000416124" description="Sialate:O-sulfotransferase 2">
    <location>
        <begin position="1"/>
        <end position="571"/>
    </location>
</feature>
<feature type="topological domain" description="Cytoplasmic" evidence="9">
    <location>
        <begin position="1"/>
        <end position="20"/>
    </location>
</feature>
<feature type="transmembrane region" description="Helical" evidence="1">
    <location>
        <begin position="21"/>
        <end position="43"/>
    </location>
</feature>
<feature type="topological domain" description="Extracellular" evidence="9">
    <location>
        <begin position="44"/>
        <end position="571"/>
    </location>
</feature>
<feature type="domain" description="WSC 1" evidence="2">
    <location>
        <begin position="133"/>
        <end position="225"/>
    </location>
</feature>
<feature type="domain" description="WSC 2" evidence="2">
    <location>
        <begin position="236"/>
        <end position="330"/>
    </location>
</feature>
<feature type="glycosylation site" description="N-linked (GlcNAc...) asparagine" evidence="1">
    <location>
        <position position="195"/>
    </location>
</feature>
<feature type="glycosylation site" description="N-linked (GlcNAc...) asparagine" evidence="1">
    <location>
        <position position="248"/>
    </location>
</feature>
<feature type="splice variant" id="VSP_042508" description="In isoform 2." evidence="4 5 6">
    <original>AKYIGCYLDDTQSRALRGVSFFDYKKMTVFRCQDNCAERGYLYAGLEFGAECYCGHKIQAAN</original>
    <variation>GKVLEGLRENTGTNVEITATKLVSLLQTHVNVGTLDLSSIISESHSYSLIGKFHLNPTLALV</variation>
    <location>
        <begin position="134"/>
        <end position="195"/>
    </location>
</feature>
<feature type="splice variant" id="VSP_042509" description="In isoform 2." evidence="4 5 6">
    <location>
        <begin position="196"/>
        <end position="571"/>
    </location>
</feature>
<feature type="mutagenesis site" description="Markedly decreases the expression of Neu5Ac8S epitope; when associated with A-359, A-361 and A-362." evidence="3">
    <original>P</original>
    <variation>A</variation>
    <location>
        <position position="356"/>
    </location>
</feature>
<feature type="mutagenesis site" description="Markedly decreases the expression of Neu5Ac8S epitope; when associated with A-356, A-361 and A-362." evidence="3">
    <original>G</original>
    <variation>A</variation>
    <location>
        <position position="359"/>
    </location>
</feature>
<feature type="mutagenesis site" description="Markedly decreases the expression of Neu5Ac8S epitope; when associated with A-356, A-359 and A-362." evidence="3">
    <original>T</original>
    <variation>A</variation>
    <location>
        <position position="361"/>
    </location>
</feature>
<feature type="mutagenesis site" description="Markedly decreases the expression of Neu5Ac8S epitope; when associated with A-356, A-359 and A-361." evidence="3">
    <original>W</original>
    <variation>A</variation>
    <location>
        <position position="362"/>
    </location>
</feature>
<gene>
    <name type="primary">Wscd2</name>
    <name type="synonym">Kiaa0789</name>
</gene>